<organism>
    <name type="scientific">Exiguobacterium sibiricum (strain DSM 17290 / CCUG 55495 / CIP 109462 / JCM 13490 / 255-15)</name>
    <dbReference type="NCBI Taxonomy" id="262543"/>
    <lineage>
        <taxon>Bacteria</taxon>
        <taxon>Bacillati</taxon>
        <taxon>Bacillota</taxon>
        <taxon>Bacilli</taxon>
        <taxon>Bacillales</taxon>
        <taxon>Bacillales Family XII. Incertae Sedis</taxon>
        <taxon>Exiguobacterium</taxon>
    </lineage>
</organism>
<proteinExistence type="inferred from homology"/>
<protein>
    <recommendedName>
        <fullName evidence="1">Large ribosomal subunit protein uL18</fullName>
    </recommendedName>
    <alternativeName>
        <fullName evidence="2">50S ribosomal protein L18</fullName>
    </alternativeName>
</protein>
<name>RL18_EXIS2</name>
<sequence length="116" mass="12593">MISKANKNATRKKRHGRVRRTIIGTAARPRLNVFRSNKNIYVQVIDDATHATLASASSLDLEKGNTTDAASAVGKLAAERALEKGIETVVFDRGGYLYHGRIKAVAEAAREAGLKF</sequence>
<comment type="function">
    <text evidence="1">This is one of the proteins that bind and probably mediate the attachment of the 5S RNA into the large ribosomal subunit, where it forms part of the central protuberance.</text>
</comment>
<comment type="subunit">
    <text evidence="1">Part of the 50S ribosomal subunit; part of the 5S rRNA/L5/L18/L25 subcomplex. Contacts the 5S and 23S rRNAs.</text>
</comment>
<comment type="similarity">
    <text evidence="1">Belongs to the universal ribosomal protein uL18 family.</text>
</comment>
<accession>B1YGW6</accession>
<evidence type="ECO:0000255" key="1">
    <source>
        <dbReference type="HAMAP-Rule" id="MF_01337"/>
    </source>
</evidence>
<evidence type="ECO:0000305" key="2"/>
<reference key="1">
    <citation type="submission" date="2008-04" db="EMBL/GenBank/DDBJ databases">
        <title>Complete sequence of chromosome of Exiguobacterium sibiricum 255-15.</title>
        <authorList>
            <consortium name="US DOE Joint Genome Institute"/>
            <person name="Copeland A."/>
            <person name="Lucas S."/>
            <person name="Lapidus A."/>
            <person name="Glavina del Rio T."/>
            <person name="Dalin E."/>
            <person name="Tice H."/>
            <person name="Bruce D."/>
            <person name="Goodwin L."/>
            <person name="Pitluck S."/>
            <person name="Kiss H."/>
            <person name="Chertkov O."/>
            <person name="Monk C."/>
            <person name="Brettin T."/>
            <person name="Detter J.C."/>
            <person name="Han C."/>
            <person name="Kuske C.R."/>
            <person name="Schmutz J."/>
            <person name="Larimer F."/>
            <person name="Land M."/>
            <person name="Hauser L."/>
            <person name="Kyrpides N."/>
            <person name="Mikhailova N."/>
            <person name="Vishnivetskaya T."/>
            <person name="Rodrigues D.F."/>
            <person name="Gilichinsky D."/>
            <person name="Tiedje J."/>
            <person name="Richardson P."/>
        </authorList>
    </citation>
    <scope>NUCLEOTIDE SEQUENCE [LARGE SCALE GENOMIC DNA]</scope>
    <source>
        <strain>DSM 17290 / CCUG 55495 / CIP 109462 / JCM 13490 / 255-15</strain>
    </source>
</reference>
<dbReference type="EMBL" id="CP001022">
    <property type="protein sequence ID" value="ACB59599.1"/>
    <property type="molecule type" value="Genomic_DNA"/>
</dbReference>
<dbReference type="RefSeq" id="WP_012369025.1">
    <property type="nucleotide sequence ID" value="NC_010556.1"/>
</dbReference>
<dbReference type="SMR" id="B1YGW6"/>
<dbReference type="STRING" id="262543.Exig_0112"/>
<dbReference type="KEGG" id="esi:Exig_0112"/>
<dbReference type="eggNOG" id="COG0256">
    <property type="taxonomic scope" value="Bacteria"/>
</dbReference>
<dbReference type="HOGENOM" id="CLU_098841_0_1_9"/>
<dbReference type="OrthoDB" id="9810939at2"/>
<dbReference type="Proteomes" id="UP000001681">
    <property type="component" value="Chromosome"/>
</dbReference>
<dbReference type="GO" id="GO:0022625">
    <property type="term" value="C:cytosolic large ribosomal subunit"/>
    <property type="evidence" value="ECO:0007669"/>
    <property type="project" value="TreeGrafter"/>
</dbReference>
<dbReference type="GO" id="GO:0008097">
    <property type="term" value="F:5S rRNA binding"/>
    <property type="evidence" value="ECO:0007669"/>
    <property type="project" value="TreeGrafter"/>
</dbReference>
<dbReference type="GO" id="GO:0003735">
    <property type="term" value="F:structural constituent of ribosome"/>
    <property type="evidence" value="ECO:0007669"/>
    <property type="project" value="InterPro"/>
</dbReference>
<dbReference type="GO" id="GO:0006412">
    <property type="term" value="P:translation"/>
    <property type="evidence" value="ECO:0007669"/>
    <property type="project" value="UniProtKB-UniRule"/>
</dbReference>
<dbReference type="CDD" id="cd00432">
    <property type="entry name" value="Ribosomal_L18_L5e"/>
    <property type="match status" value="1"/>
</dbReference>
<dbReference type="FunFam" id="3.30.420.100:FF:000001">
    <property type="entry name" value="50S ribosomal protein L18"/>
    <property type="match status" value="1"/>
</dbReference>
<dbReference type="Gene3D" id="3.30.420.100">
    <property type="match status" value="1"/>
</dbReference>
<dbReference type="HAMAP" id="MF_01337_B">
    <property type="entry name" value="Ribosomal_uL18_B"/>
    <property type="match status" value="1"/>
</dbReference>
<dbReference type="InterPro" id="IPR004389">
    <property type="entry name" value="Ribosomal_uL18_bac-type"/>
</dbReference>
<dbReference type="InterPro" id="IPR005484">
    <property type="entry name" value="Ribosomal_uL18_bac/euk"/>
</dbReference>
<dbReference type="NCBIfam" id="TIGR00060">
    <property type="entry name" value="L18_bact"/>
    <property type="match status" value="1"/>
</dbReference>
<dbReference type="PANTHER" id="PTHR12899">
    <property type="entry name" value="39S RIBOSOMAL PROTEIN L18, MITOCHONDRIAL"/>
    <property type="match status" value="1"/>
</dbReference>
<dbReference type="PANTHER" id="PTHR12899:SF3">
    <property type="entry name" value="LARGE RIBOSOMAL SUBUNIT PROTEIN UL18M"/>
    <property type="match status" value="1"/>
</dbReference>
<dbReference type="Pfam" id="PF00861">
    <property type="entry name" value="Ribosomal_L18p"/>
    <property type="match status" value="1"/>
</dbReference>
<dbReference type="SUPFAM" id="SSF53137">
    <property type="entry name" value="Translational machinery components"/>
    <property type="match status" value="1"/>
</dbReference>
<gene>
    <name evidence="1" type="primary">rplR</name>
    <name type="ordered locus">Exig_0112</name>
</gene>
<keyword id="KW-1185">Reference proteome</keyword>
<keyword id="KW-0687">Ribonucleoprotein</keyword>
<keyword id="KW-0689">Ribosomal protein</keyword>
<keyword id="KW-0694">RNA-binding</keyword>
<keyword id="KW-0699">rRNA-binding</keyword>
<feature type="chain" id="PRO_1000142666" description="Large ribosomal subunit protein uL18">
    <location>
        <begin position="1"/>
        <end position="116"/>
    </location>
</feature>